<accession>B3PGJ1</accession>
<reference key="1">
    <citation type="journal article" date="2000" name="FEMS Microbiol. Lett.">
        <title>Alpha-galactosidase A from Pseudomonas fluorescens subsp. cellulosa: cloning, high level expression and its role in galactomannan hydrolysis.</title>
        <authorList>
            <person name="Halstead J.R."/>
            <person name="Fransen M.P."/>
            <person name="Eberhart R.Y."/>
            <person name="Park A.J."/>
            <person name="Gilbert H.J."/>
            <person name="Hazlewood G.P."/>
        </authorList>
    </citation>
    <scope>NUCLEOTIDE SEQUENCE [GENOMIC DNA]</scope>
    <scope>FUNCTION</scope>
    <scope>CATALYTIC ACTIVITY</scope>
    <scope>SUBSTRATE SPECIFICITY</scope>
    <scope>BIOPHYSICOCHEMICAL PROPERTIES</scope>
</reference>
<reference key="2">
    <citation type="journal article" date="2008" name="J. Bacteriol.">
        <title>Insights into plant cell wall degradation from the genome sequence of the soil bacterium Cellvibrio japonicus.</title>
        <authorList>
            <person name="DeBoy R.T."/>
            <person name="Mongodin E.F."/>
            <person name="Fouts D.E."/>
            <person name="Tailford L.E."/>
            <person name="Khouri H."/>
            <person name="Emerson J.B."/>
            <person name="Mohamoud Y."/>
            <person name="Watkins K."/>
            <person name="Henrissat B."/>
            <person name="Gilbert H.J."/>
            <person name="Nelson K.E."/>
        </authorList>
    </citation>
    <scope>NUCLEOTIDE SEQUENCE [LARGE SCALE GENOMIC DNA]</scope>
    <source>
        <strain>Ueda107</strain>
    </source>
</reference>
<reference key="3">
    <citation type="journal article" date="2004" name="Mol. Biol. (Mosk.)">
        <title>Phylogenetic analysis of alpha-galactosidases of the GH27 family.</title>
        <authorList>
            <person name="Naumov D.G."/>
        </authorList>
    </citation>
    <scope>PHYLOGENETIC STUDY</scope>
</reference>
<proteinExistence type="evidence at protein level"/>
<dbReference type="EC" id="3.2.1.22"/>
<dbReference type="EMBL" id="CP000934">
    <property type="protein sequence ID" value="ACE85287.1"/>
    <property type="molecule type" value="Genomic_DNA"/>
</dbReference>
<dbReference type="RefSeq" id="WP_012485929.1">
    <property type="nucleotide sequence ID" value="NC_010995.1"/>
</dbReference>
<dbReference type="SMR" id="B3PGJ1"/>
<dbReference type="STRING" id="498211.CJA_0246"/>
<dbReference type="CAZy" id="GH27">
    <property type="family name" value="Glycoside Hydrolase Family 27"/>
</dbReference>
<dbReference type="DNASU" id="6415039"/>
<dbReference type="KEGG" id="cja:CJA_0246"/>
<dbReference type="eggNOG" id="COG3345">
    <property type="taxonomic scope" value="Bacteria"/>
</dbReference>
<dbReference type="HOGENOM" id="CLU_013093_2_2_6"/>
<dbReference type="OrthoDB" id="9807519at2"/>
<dbReference type="Proteomes" id="UP000001036">
    <property type="component" value="Chromosome"/>
</dbReference>
<dbReference type="GO" id="GO:0004557">
    <property type="term" value="F:alpha-galactosidase activity"/>
    <property type="evidence" value="ECO:0000314"/>
    <property type="project" value="UniProtKB"/>
</dbReference>
<dbReference type="GO" id="GO:0051682">
    <property type="term" value="P:galactomannan catabolic process"/>
    <property type="evidence" value="ECO:0000314"/>
    <property type="project" value="UniProtKB"/>
</dbReference>
<dbReference type="CDD" id="cd14792">
    <property type="entry name" value="GH27"/>
    <property type="match status" value="1"/>
</dbReference>
<dbReference type="FunFam" id="3.20.20.70:FF:000202">
    <property type="entry name" value="Alpha-galactosidase"/>
    <property type="match status" value="1"/>
</dbReference>
<dbReference type="Gene3D" id="3.20.20.70">
    <property type="entry name" value="Aldolase class I"/>
    <property type="match status" value="1"/>
</dbReference>
<dbReference type="Gene3D" id="2.60.40.1180">
    <property type="entry name" value="Golgi alpha-mannosidase II"/>
    <property type="match status" value="1"/>
</dbReference>
<dbReference type="InterPro" id="IPR013785">
    <property type="entry name" value="Aldolase_TIM"/>
</dbReference>
<dbReference type="InterPro" id="IPR002241">
    <property type="entry name" value="Glyco_hydro_27"/>
</dbReference>
<dbReference type="InterPro" id="IPR000111">
    <property type="entry name" value="Glyco_hydro_27/36_CS"/>
</dbReference>
<dbReference type="InterPro" id="IPR013780">
    <property type="entry name" value="Glyco_hydro_b"/>
</dbReference>
<dbReference type="InterPro" id="IPR017853">
    <property type="entry name" value="Glycoside_hydrolase_SF"/>
</dbReference>
<dbReference type="InterPro" id="IPR041233">
    <property type="entry name" value="Melibiase_C"/>
</dbReference>
<dbReference type="PANTHER" id="PTHR11452:SF75">
    <property type="entry name" value="ALPHA-GALACTOSIDASE MEL1"/>
    <property type="match status" value="1"/>
</dbReference>
<dbReference type="PANTHER" id="PTHR11452">
    <property type="entry name" value="ALPHA-GALACTOSIDASE/ALPHA-N-ACETYLGALACTOSAMINIDASE"/>
    <property type="match status" value="1"/>
</dbReference>
<dbReference type="Pfam" id="PF16499">
    <property type="entry name" value="Melibiase_2"/>
    <property type="match status" value="1"/>
</dbReference>
<dbReference type="Pfam" id="PF17801">
    <property type="entry name" value="Melibiase_C"/>
    <property type="match status" value="1"/>
</dbReference>
<dbReference type="PRINTS" id="PR00740">
    <property type="entry name" value="GLHYDRLASE27"/>
</dbReference>
<dbReference type="SUPFAM" id="SSF51445">
    <property type="entry name" value="(Trans)glycosidases"/>
    <property type="match status" value="1"/>
</dbReference>
<dbReference type="SUPFAM" id="SSF51011">
    <property type="entry name" value="Glycosyl hydrolase domain"/>
    <property type="match status" value="1"/>
</dbReference>
<dbReference type="PROSITE" id="PS00512">
    <property type="entry name" value="ALPHA_GALACTOSIDASE"/>
    <property type="match status" value="1"/>
</dbReference>
<keyword id="KW-1015">Disulfide bond</keyword>
<keyword id="KW-0326">Glycosidase</keyword>
<keyword id="KW-0378">Hydrolase</keyword>
<keyword id="KW-1185">Reference proteome</keyword>
<keyword id="KW-0732">Signal</keyword>
<comment type="function">
    <text evidence="3">Hydrolyzes galactomannan found in plant cell wall, by cleaving alpha-1,6-D-galactose side-chains from the mannan backbone. Appears to act in synergy with mannanase (ManA) to elicit hydrolysis of galactomannan. Has greater activity against galactomannans with decreased degree of polymerisation values. To a lesser extent, is also able to degrade other galactosides containing alpha-1,6-linked D-galactose, such as melibiose and stachyose.</text>
</comment>
<comment type="catalytic activity">
    <reaction evidence="3">
        <text>Hydrolysis of terminal, non-reducing alpha-D-galactose residues in alpha-D-galactosides, including galactose oligosaccharides, galactomannans and galactolipids.</text>
        <dbReference type="EC" id="3.2.1.22"/>
    </reaction>
</comment>
<comment type="biophysicochemical properties">
    <phDependence>
        <text evidence="3">Optimum pH is 8.2.</text>
    </phDependence>
    <temperatureDependence>
        <text evidence="3">Optimum temperature is 50 degrees Celsius. Displays half maximal activity in 25 minutes and 7 minutes when pre-incubated at 50 degrees Celsius and 55 degrees Celsius, respectively.</text>
    </temperatureDependence>
</comment>
<comment type="similarity">
    <text evidence="4">Belongs to the glycosyl hydrolase 27 family.</text>
</comment>
<name>AGAL_CELJU</name>
<sequence>MRKQLLLGLGLVSALLVSVQASAQKFEQLAKTPQMGWNSWNTFGCNVDEKMIRAMADAMVTSGMKAAGYEYINIDDCWHGERDKNGFIQADKKHFPSGMKALADYVHAKGLKLGIYSDAGNTTCAGRPGSRGHEYQDALTYASWGIDYVKYDWCDTQDINPKSAYATMRDAIHKAGRPMLFSICEWGDNQPWEWAQDVGHSWRTTGDIYPCWNCEHNHGSWSSFGVLPILDKQAGLRKYAGPGHWNDMDMMEVGNGMTEEEDRAHFSLWAFMASPLIAGNDLRNMSDTTRAILTHKETIAINQDKLGIQAMKWIDEGDLEIYIKPLEKGHYAVLFLNRADDAMDYRFDWSFHYMKDDISKHEIFFDKQAFNWRNIWNGETGSTKEVLNIKVPAHGVVVLRLSPR</sequence>
<organism>
    <name type="scientific">Cellvibrio japonicus (strain Ueda107)</name>
    <name type="common">Pseudomonas fluorescens subsp. cellulosa</name>
    <dbReference type="NCBI Taxonomy" id="498211"/>
    <lineage>
        <taxon>Bacteria</taxon>
        <taxon>Pseudomonadati</taxon>
        <taxon>Pseudomonadota</taxon>
        <taxon>Gammaproteobacteria</taxon>
        <taxon>Cellvibrionales</taxon>
        <taxon>Cellvibrionaceae</taxon>
        <taxon>Cellvibrio</taxon>
    </lineage>
</organism>
<protein>
    <recommendedName>
        <fullName>Alpha-galactosidase A</fullName>
        <ecNumber>3.2.1.22</ecNumber>
    </recommendedName>
    <alternativeName>
        <fullName>Alpha-D-galactoside galactohydrolase</fullName>
    </alternativeName>
    <alternativeName>
        <fullName>Alpha-galactosidase 27A</fullName>
    </alternativeName>
    <alternativeName>
        <fullName>Melibiase</fullName>
    </alternativeName>
</protein>
<evidence type="ECO:0000250" key="1"/>
<evidence type="ECO:0000255" key="2"/>
<evidence type="ECO:0000269" key="3">
    <source>
    </source>
</evidence>
<evidence type="ECO:0000305" key="4"/>
<gene>
    <name type="primary">agaA</name>
    <name type="synonym">aga27A</name>
    <name type="ordered locus">CJA_0246</name>
</gene>
<feature type="signal peptide" evidence="2">
    <location>
        <begin position="1"/>
        <end position="23"/>
    </location>
</feature>
<feature type="chain" id="PRO_0000393719" description="Alpha-galactosidase A">
    <location>
        <begin position="24"/>
        <end position="404"/>
    </location>
</feature>
<feature type="active site" description="Nucleophile" evidence="1">
    <location>
        <position position="152"/>
    </location>
</feature>
<feature type="active site" description="Proton donor" evidence="1">
    <location>
        <position position="207"/>
    </location>
</feature>
<feature type="binding site" evidence="1">
    <location>
        <begin position="185"/>
        <end position="189"/>
    </location>
    <ligand>
        <name>substrate</name>
    </ligand>
</feature>
<feature type="disulfide bond" evidence="1">
    <location>
        <begin position="45"/>
        <end position="77"/>
    </location>
</feature>
<feature type="disulfide bond" evidence="1">
    <location>
        <begin position="124"/>
        <end position="154"/>
    </location>
</feature>